<reference key="1">
    <citation type="submission" date="2016-02" db="EMBL/GenBank/DDBJ databases">
        <title>Complete genome sequence of the methanotrophic bacterium Methylomonas sp. DH-1.</title>
        <authorList>
            <person name="Hur D.H."/>
            <person name="Na J.-G."/>
            <person name="Jeong H."/>
            <person name="Yoon S.H."/>
            <person name="Lee E.Y."/>
        </authorList>
    </citation>
    <scope>NUCLEOTIDE SEQUENCE [LARGE SCALE GENOMIC DNA]</scope>
    <source>
        <strain>DH-1</strain>
    </source>
</reference>
<reference evidence="7 8 9 10 11 12" key="2">
    <citation type="journal article" date="2021" name="FEBS Open Bio">
        <title>Crystal structure of a novel homodimeric L-ribulose 3-epimerase from Methylomonus sp.</title>
        <authorList>
            <person name="Yoshida H."/>
            <person name="Yoshihara A."/>
            <person name="Kato S."/>
            <person name="Mochizuki S."/>
            <person name="Akimitsu K."/>
            <person name="Izumori K."/>
            <person name="Kamitori S."/>
        </authorList>
    </citation>
    <scope>X-RAY CRYSTALLOGRAPHY (1.58 ANGSTROMS) IN COMPLEXES WITH D-ALLULOSE; D-FRUCTOSE; L-SORBOSE; L-TAGATOSE; MAGNESIUM AND MANGANESE</scope>
    <scope>FUNCTION</scope>
    <scope>CATALYTIC ACTIVITY</scope>
    <scope>COFACTOR</scope>
    <scope>BIOPHYSICOCHEMICAL PROPERTIES</scope>
    <scope>SUBUNIT</scope>
    <scope>DOMAIN</scope>
    <scope>MUTAGENESIS OF TYR-9; TYR-37 AND TYR-286</scope>
    <source>
        <strain>DH-1</strain>
    </source>
</reference>
<gene>
    <name evidence="5" type="ORF">AYM39_05640</name>
</gene>
<evidence type="ECO:0000250" key="1">
    <source>
        <dbReference type="UniProtKB" id="Q9WYP7"/>
    </source>
</evidence>
<evidence type="ECO:0000269" key="2">
    <source>
    </source>
</evidence>
<evidence type="ECO:0000303" key="3">
    <source>
    </source>
</evidence>
<evidence type="ECO:0000305" key="4"/>
<evidence type="ECO:0000312" key="5">
    <source>
        <dbReference type="EMBL" id="ANE54717.1"/>
    </source>
</evidence>
<evidence type="ECO:0000312" key="6">
    <source>
        <dbReference type="PDB" id="7CJ5"/>
    </source>
</evidence>
<evidence type="ECO:0007744" key="7">
    <source>
        <dbReference type="PDB" id="7CJ4"/>
    </source>
</evidence>
<evidence type="ECO:0007744" key="8">
    <source>
        <dbReference type="PDB" id="7CJ5"/>
    </source>
</evidence>
<evidence type="ECO:0007744" key="9">
    <source>
        <dbReference type="PDB" id="7CJ6"/>
    </source>
</evidence>
<evidence type="ECO:0007744" key="10">
    <source>
        <dbReference type="PDB" id="7CJ7"/>
    </source>
</evidence>
<evidence type="ECO:0007744" key="11">
    <source>
        <dbReference type="PDB" id="7CJ8"/>
    </source>
</evidence>
<evidence type="ECO:0007744" key="12">
    <source>
        <dbReference type="PDB" id="7CJ9"/>
    </source>
</evidence>
<evidence type="ECO:0007829" key="13">
    <source>
        <dbReference type="PDB" id="7CJ5"/>
    </source>
</evidence>
<evidence type="ECO:0007829" key="14">
    <source>
        <dbReference type="PDB" id="7CJ9"/>
    </source>
</evidence>
<dbReference type="EC" id="5.1.3.31" evidence="2"/>
<dbReference type="EMBL" id="CP014360">
    <property type="protein sequence ID" value="ANE54717.1"/>
    <property type="molecule type" value="Genomic_DNA"/>
</dbReference>
<dbReference type="RefSeq" id="WP_064020855.1">
    <property type="nucleotide sequence ID" value="NZ_CP014360.1"/>
</dbReference>
<dbReference type="PDB" id="7CJ4">
    <property type="method" value="X-ray"/>
    <property type="resolution" value="2.08 A"/>
    <property type="chains" value="A/B=1-286"/>
</dbReference>
<dbReference type="PDB" id="7CJ5">
    <property type="method" value="X-ray"/>
    <property type="resolution" value="1.80 A"/>
    <property type="chains" value="A/B=1-286"/>
</dbReference>
<dbReference type="PDB" id="7CJ6">
    <property type="method" value="X-ray"/>
    <property type="resolution" value="1.80 A"/>
    <property type="chains" value="A/B=1-286"/>
</dbReference>
<dbReference type="PDB" id="7CJ7">
    <property type="method" value="X-ray"/>
    <property type="resolution" value="1.70 A"/>
    <property type="chains" value="A/B=1-286"/>
</dbReference>
<dbReference type="PDB" id="7CJ8">
    <property type="method" value="X-ray"/>
    <property type="resolution" value="2.05 A"/>
    <property type="chains" value="A/B/C/D/E/F=1-286"/>
</dbReference>
<dbReference type="PDB" id="7CJ9">
    <property type="method" value="X-ray"/>
    <property type="resolution" value="1.58 A"/>
    <property type="chains" value="A/B/C/D/E/F/G/H=1-286"/>
</dbReference>
<dbReference type="PDBsum" id="7CJ4"/>
<dbReference type="PDBsum" id="7CJ5"/>
<dbReference type="PDBsum" id="7CJ6"/>
<dbReference type="PDBsum" id="7CJ7"/>
<dbReference type="PDBsum" id="7CJ8"/>
<dbReference type="PDBsum" id="7CJ9"/>
<dbReference type="SMR" id="A0A172U6X0"/>
<dbReference type="STRING" id="1727196.AYM39_05640"/>
<dbReference type="KEGG" id="mdh:AYM39_05640"/>
<dbReference type="Proteomes" id="UP000077385">
    <property type="component" value="Chromosome"/>
</dbReference>
<dbReference type="GO" id="GO:0016853">
    <property type="term" value="F:isomerase activity"/>
    <property type="evidence" value="ECO:0007669"/>
    <property type="project" value="UniProtKB-KW"/>
</dbReference>
<dbReference type="GO" id="GO:0046872">
    <property type="term" value="F:metal ion binding"/>
    <property type="evidence" value="ECO:0007669"/>
    <property type="project" value="UniProtKB-KW"/>
</dbReference>
<dbReference type="Gene3D" id="3.20.20.150">
    <property type="entry name" value="Divalent-metal-dependent TIM barrel enzymes"/>
    <property type="match status" value="1"/>
</dbReference>
<dbReference type="InterPro" id="IPR050312">
    <property type="entry name" value="IolE/XylAMocC-like"/>
</dbReference>
<dbReference type="InterPro" id="IPR036237">
    <property type="entry name" value="Xyl_isomerase-like_sf"/>
</dbReference>
<dbReference type="InterPro" id="IPR013022">
    <property type="entry name" value="Xyl_isomerase-like_TIM-brl"/>
</dbReference>
<dbReference type="PANTHER" id="PTHR12110">
    <property type="entry name" value="HYDROXYPYRUVATE ISOMERASE"/>
    <property type="match status" value="1"/>
</dbReference>
<dbReference type="PANTHER" id="PTHR12110:SF41">
    <property type="entry name" value="INOSOSE DEHYDRATASE"/>
    <property type="match status" value="1"/>
</dbReference>
<dbReference type="Pfam" id="PF01261">
    <property type="entry name" value="AP_endonuc_2"/>
    <property type="match status" value="1"/>
</dbReference>
<dbReference type="SUPFAM" id="SSF51658">
    <property type="entry name" value="Xylose isomerase-like"/>
    <property type="match status" value="1"/>
</dbReference>
<feature type="chain" id="PRO_0000458070" description="L-ribulose 3-epimerase">
    <location>
        <begin position="1"/>
        <end position="286"/>
    </location>
</feature>
<feature type="active site" description="Proton donor/acceptor" evidence="1">
    <location>
        <position position="152"/>
    </location>
</feature>
<feature type="active site" description="Proton donor/acceptor" evidence="1">
    <location>
        <position position="246"/>
    </location>
</feature>
<feature type="binding site" evidence="2 11">
    <location>
        <position position="12"/>
    </location>
    <ligand>
        <name>D-allulose</name>
        <dbReference type="ChEBI" id="CHEBI:27605"/>
    </ligand>
</feature>
<feature type="binding site" evidence="2 8 12">
    <location>
        <position position="12"/>
    </location>
    <ligand>
        <name>D-fructose</name>
        <dbReference type="ChEBI" id="CHEBI:37721"/>
    </ligand>
</feature>
<feature type="binding site" evidence="2 9">
    <location>
        <position position="69"/>
    </location>
    <ligand>
        <name>D-allulose</name>
        <dbReference type="ChEBI" id="CHEBI:27605"/>
    </ligand>
</feature>
<feature type="binding site" evidence="2 8 12">
    <location>
        <position position="69"/>
    </location>
    <ligand>
        <name>D-fructose</name>
        <dbReference type="ChEBI" id="CHEBI:37721"/>
    </ligand>
</feature>
<feature type="binding site" evidence="2 9 11">
    <location>
        <position position="152"/>
    </location>
    <ligand>
        <name>D-allulose</name>
        <dbReference type="ChEBI" id="CHEBI:27605"/>
    </ligand>
</feature>
<feature type="binding site" evidence="2 8 12">
    <location>
        <position position="152"/>
    </location>
    <ligand>
        <name>D-fructose</name>
        <dbReference type="ChEBI" id="CHEBI:37721"/>
    </ligand>
</feature>
<feature type="binding site" evidence="2 6 7 9 10 11 12">
    <location>
        <position position="152"/>
    </location>
    <ligand>
        <name>Mn(2+)</name>
        <dbReference type="ChEBI" id="CHEBI:29035"/>
    </ligand>
</feature>
<feature type="binding site" evidence="2 9 11">
    <location>
        <position position="158"/>
    </location>
    <ligand>
        <name>D-allulose</name>
        <dbReference type="ChEBI" id="CHEBI:27605"/>
    </ligand>
</feature>
<feature type="binding site" evidence="2 8 12">
    <location>
        <position position="158"/>
    </location>
    <ligand>
        <name>D-fructose</name>
        <dbReference type="ChEBI" id="CHEBI:37721"/>
    </ligand>
</feature>
<feature type="binding site" evidence="2 6 7 9 10 11 12">
    <location>
        <position position="185"/>
    </location>
    <ligand>
        <name>Mn(2+)</name>
        <dbReference type="ChEBI" id="CHEBI:29035"/>
    </ligand>
</feature>
<feature type="binding site" evidence="2 9 11">
    <location>
        <position position="188"/>
    </location>
    <ligand>
        <name>D-allulose</name>
        <dbReference type="ChEBI" id="CHEBI:27605"/>
    </ligand>
</feature>
<feature type="binding site" evidence="2 8 12">
    <location>
        <position position="188"/>
    </location>
    <ligand>
        <name>D-fructose</name>
        <dbReference type="ChEBI" id="CHEBI:37721"/>
    </ligand>
</feature>
<feature type="binding site" evidence="2 9 11">
    <location>
        <position position="211"/>
    </location>
    <ligand>
        <name>D-allulose</name>
        <dbReference type="ChEBI" id="CHEBI:27605"/>
    </ligand>
</feature>
<feature type="binding site" evidence="2 8 12">
    <location>
        <position position="211"/>
    </location>
    <ligand>
        <name>D-fructose</name>
        <dbReference type="ChEBI" id="CHEBI:37721"/>
    </ligand>
</feature>
<feature type="binding site" evidence="2 6 7 9 10 11 12">
    <location>
        <position position="211"/>
    </location>
    <ligand>
        <name>Mn(2+)</name>
        <dbReference type="ChEBI" id="CHEBI:29035"/>
    </ligand>
</feature>
<feature type="binding site" evidence="2 9 11">
    <location>
        <position position="217"/>
    </location>
    <ligand>
        <name>D-allulose</name>
        <dbReference type="ChEBI" id="CHEBI:27605"/>
    </ligand>
</feature>
<feature type="binding site" evidence="2 8 12">
    <location>
        <position position="217"/>
    </location>
    <ligand>
        <name>D-fructose</name>
        <dbReference type="ChEBI" id="CHEBI:37721"/>
    </ligand>
</feature>
<feature type="binding site" evidence="2 9 11">
    <location>
        <position position="246"/>
    </location>
    <ligand>
        <name>D-allulose</name>
        <dbReference type="ChEBI" id="CHEBI:27605"/>
    </ligand>
</feature>
<feature type="binding site" evidence="2 8 12">
    <location>
        <position position="246"/>
    </location>
    <ligand>
        <name>D-fructose</name>
        <dbReference type="ChEBI" id="CHEBI:37721"/>
    </ligand>
</feature>
<feature type="binding site" evidence="2 6 7 9 10 11 12">
    <location>
        <position position="246"/>
    </location>
    <ligand>
        <name>Mn(2+)</name>
        <dbReference type="ChEBI" id="CHEBI:29035"/>
    </ligand>
</feature>
<feature type="mutagenesis site" description="Affects thermal stability. Slight increase of the activity with D-allulose as substrate; when associated with F-37 and L-286." evidence="2">
    <original>Y</original>
    <variation>I</variation>
    <location>
        <position position="9"/>
    </location>
</feature>
<feature type="mutagenesis site" description="Affects thermal stability. Slight increase of the activity with D-allulose as substrate; when associated with Y-9 and L-286." evidence="2">
    <original>Y</original>
    <variation>F</variation>
    <location>
        <position position="37"/>
    </location>
</feature>
<feature type="mutagenesis site" description="Affects thermal stability. Slight increase of the activity with D-allulose as substrate; when associated with Y-9 and F-37." evidence="2">
    <original>Y</original>
    <variation>L</variation>
    <location>
        <position position="286"/>
    </location>
</feature>
<feature type="strand" evidence="14">
    <location>
        <begin position="8"/>
        <end position="12"/>
    </location>
</feature>
<feature type="helix" evidence="14">
    <location>
        <begin position="13"/>
        <end position="15"/>
    </location>
</feature>
<feature type="helix" evidence="14">
    <location>
        <begin position="22"/>
        <end position="35"/>
    </location>
</feature>
<feature type="strand" evidence="14">
    <location>
        <begin position="38"/>
        <end position="43"/>
    </location>
</feature>
<feature type="helix" evidence="13">
    <location>
        <begin position="47"/>
        <end position="49"/>
    </location>
</feature>
<feature type="helix" evidence="14">
    <location>
        <begin position="52"/>
        <end position="61"/>
    </location>
</feature>
<feature type="strand" evidence="14">
    <location>
        <begin position="65"/>
        <end position="72"/>
    </location>
</feature>
<feature type="helix" evidence="14">
    <location>
        <begin position="74"/>
        <end position="76"/>
    </location>
</feature>
<feature type="helix" evidence="14">
    <location>
        <begin position="83"/>
        <end position="102"/>
    </location>
</feature>
<feature type="strand" evidence="14">
    <location>
        <begin position="107"/>
        <end position="117"/>
    </location>
</feature>
<feature type="helix" evidence="14">
    <location>
        <begin position="125"/>
        <end position="143"/>
    </location>
</feature>
<feature type="turn" evidence="14">
    <location>
        <begin position="144"/>
        <end position="146"/>
    </location>
</feature>
<feature type="strand" evidence="14">
    <location>
        <begin position="148"/>
        <end position="152"/>
    </location>
</feature>
<feature type="turn" evidence="14">
    <location>
        <begin position="156"/>
        <end position="158"/>
    </location>
</feature>
<feature type="helix" evidence="14">
    <location>
        <begin position="165"/>
        <end position="175"/>
    </location>
</feature>
<feature type="strand" evidence="14">
    <location>
        <begin position="180"/>
        <end position="185"/>
    </location>
</feature>
<feature type="helix" evidence="14">
    <location>
        <begin position="186"/>
        <end position="192"/>
    </location>
</feature>
<feature type="strand" evidence="14">
    <location>
        <begin position="193"/>
        <end position="197"/>
    </location>
</feature>
<feature type="helix" evidence="14">
    <location>
        <begin position="198"/>
        <end position="203"/>
    </location>
</feature>
<feature type="helix" evidence="14">
    <location>
        <begin position="204"/>
        <end position="206"/>
    </location>
</feature>
<feature type="strand" evidence="14">
    <location>
        <begin position="207"/>
        <end position="212"/>
    </location>
</feature>
<feature type="strand" evidence="14">
    <location>
        <begin position="217"/>
        <end position="219"/>
    </location>
</feature>
<feature type="strand" evidence="14">
    <location>
        <begin position="222"/>
        <end position="224"/>
    </location>
</feature>
<feature type="helix" evidence="14">
    <location>
        <begin position="227"/>
        <end position="236"/>
    </location>
</feature>
<feature type="strand" evidence="14">
    <location>
        <begin position="241"/>
        <end position="245"/>
    </location>
</feature>
<feature type="turn" evidence="13">
    <location>
        <begin position="250"/>
        <end position="252"/>
    </location>
</feature>
<feature type="turn" evidence="14">
    <location>
        <begin position="255"/>
        <end position="262"/>
    </location>
</feature>
<feature type="helix" evidence="14">
    <location>
        <begin position="271"/>
        <end position="285"/>
    </location>
</feature>
<proteinExistence type="evidence at protein level"/>
<sequence length="286" mass="31300">MAFPKRLEYGGHALVWSGDWSAAGARKAIAGAARAGYDYIEIALLDPWQIDVALTKDLLQEYNLRAHASLGLSAATDVTSTDPAIVAKGDELLRKATDVLYALGGSELCGVIYCALGKYPGPASRENRANSVAAMQRLADYAADKGINIDLEVVNRYETNIMNTGLEGLAFLDEVNRPNAFLHLDTYHMNIEENGMAKSVLAAGDRLGYVHIGESHRGYLGTGNVDFASFFAALKQIDYRGPITFESFSSEIVDPKLSNTLCVWRNLWHDSDDLAGKALEFIKQRY</sequence>
<name>LR3E_METSD</name>
<accession>A0A172U6X0</accession>
<comment type="function">
    <text evidence="2">Catalyzes the epimerization of various ketoses at the C(3) position (PubMed:33838083). Exhibits the highest enzymatic activity toward L-ribulose, followed by D-ribulose, D-allulose and D-fructose (PubMed:33838083). Shows lower activity with L-xylulose, L-tagatose, D-xylulose, D-tagatose, L-sorbose, D-sorbose, and weak activity with L-allulose and L-fructose (PubMed:33838083).</text>
</comment>
<comment type="catalytic activity">
    <reaction evidence="2">
        <text>L-ribulose = L-xylulose</text>
        <dbReference type="Rhea" id="RHEA:53268"/>
        <dbReference type="ChEBI" id="CHEBI:16880"/>
        <dbReference type="ChEBI" id="CHEBI:17399"/>
        <dbReference type="EC" id="5.1.3.31"/>
    </reaction>
</comment>
<comment type="catalytic activity">
    <reaction evidence="2">
        <text>D-ribulose = D-xylulose</text>
        <dbReference type="Rhea" id="RHEA:51544"/>
        <dbReference type="ChEBI" id="CHEBI:17140"/>
        <dbReference type="ChEBI" id="CHEBI:17173"/>
        <dbReference type="EC" id="5.1.3.31"/>
    </reaction>
</comment>
<comment type="catalytic activity">
    <reaction evidence="2">
        <text>D-allulose = keto-D-fructose</text>
        <dbReference type="Rhea" id="RHEA:42360"/>
        <dbReference type="ChEBI" id="CHEBI:27605"/>
        <dbReference type="ChEBI" id="CHEBI:48095"/>
        <dbReference type="EC" id="5.1.3.31"/>
    </reaction>
</comment>
<comment type="catalytic activity">
    <reaction evidence="2">
        <text>keto-L-tagatose = keto-L-sorbose</text>
        <dbReference type="Rhea" id="RHEA:61780"/>
        <dbReference type="ChEBI" id="CHEBI:13172"/>
        <dbReference type="ChEBI" id="CHEBI:134275"/>
    </reaction>
</comment>
<comment type="catalytic activity">
    <reaction evidence="2">
        <text>keto-D-tagatose = keto-D-sorbose</text>
        <dbReference type="Rhea" id="RHEA:43048"/>
        <dbReference type="ChEBI" id="CHEBI:13022"/>
        <dbReference type="ChEBI" id="CHEBI:47693"/>
        <dbReference type="EC" id="5.1.3.31"/>
    </reaction>
</comment>
<comment type="cofactor">
    <cofactor evidence="2">
        <name>Mn(2+)</name>
        <dbReference type="ChEBI" id="CHEBI:29035"/>
    </cofactor>
</comment>
<comment type="biophysicochemical properties">
    <kinetics>
        <KM evidence="2">22.4 mM for L-ribulose</KM>
        <KM evidence="2">27.8 mM for L-allulose</KM>
        <text evidence="2">kcat is 4923 min(-1) with L-ribulose as substrate. kcat is 4103 min(-1) with D-allulose as substrate.</text>
    </kinetics>
    <temperatureDependence>
        <text evidence="2">Optimum temperature is 70 degrees Celsius with D-allulose as substrate.</text>
    </temperatureDependence>
</comment>
<comment type="subunit">
    <text evidence="2">Homodimer.</text>
</comment>
<comment type="domain">
    <text evidence="2">Contains a unique short C-terminal alpha-helix compared to the known structures of the structurally similar homotetrameric L-ribulose 3-epimerases and D-allulose 3-epimerases (PubMed:33838083). The length of the C-terminal alpha-helix was thought to be involved in tetramerization and increasing stability, however, the addition of residues to MetLRE at the C terminus does not lead to tetramer formation (PubMed:33838083).</text>
</comment>
<comment type="similarity">
    <text evidence="4">Belongs to the hyi family.</text>
</comment>
<organism>
    <name type="scientific">Methylomonas sp. (strain DH-1)</name>
    <dbReference type="NCBI Taxonomy" id="1727196"/>
    <lineage>
        <taxon>Bacteria</taxon>
        <taxon>Pseudomonadati</taxon>
        <taxon>Pseudomonadota</taxon>
        <taxon>Gammaproteobacteria</taxon>
        <taxon>Methylococcales</taxon>
        <taxon>Methylococcaceae</taxon>
        <taxon>Methylomonas</taxon>
    </lineage>
</organism>
<protein>
    <recommendedName>
        <fullName evidence="3">L-ribulose 3-epimerase</fullName>
        <shortName evidence="3">LRE</shortName>
        <ecNumber evidence="2">5.1.3.31</ecNumber>
    </recommendedName>
    <alternativeName>
        <fullName evidence="3">MetLRE</fullName>
    </alternativeName>
</protein>
<keyword id="KW-0002">3D-structure</keyword>
<keyword id="KW-0119">Carbohydrate metabolism</keyword>
<keyword id="KW-0413">Isomerase</keyword>
<keyword id="KW-0464">Manganese</keyword>
<keyword id="KW-0479">Metal-binding</keyword>
<keyword id="KW-1185">Reference proteome</keyword>